<sequence length="1025" mass="116801">MMQPTPAPSSAPGSPQRTQAEPEMETPSYPQPPQNVGTAPFSVLVKLFEKLATERKQERRRKLLDAWFRHWRREKGFDLYPVLRLLLPQKDRDRAVYGLKEKNLAKTYIKLIPLGMRDPDAIRLLNWKKPTERDKSSGDFPQVLCEVVSKRSSVIEGTLTIDELNEILDDIAKNMGKSDVQSKILRRIYNNSTADEQRWIIRIILKDMNISVKETTVFAVFHPDAQDLYNTCSDLKKVAWELWDPSRRLNAKDKEIQIFHAFAPMLCKRPTRKIEETVKAMGGSKFIIEEKLDGERMQLHKRGNEYFYCSRKGKDYTYLYGKHIGAGSLTPFIDSAFDSRIDDIILDGEMLVWDPVSERNLPFGTLKTAALDRSKKENNPRPCFKVFDLLYLNGMSLLDKTVKFRKNNLRHCIKPIPGRIEFVEEYQGETANDIRKRMEQVMENRGEGLVIKHPKAKYILNGRNTDWIKVKPEYMDNMGETVDVLVVAGNYGSGKRGGGVSTLICAVMDDRRPDSDDEPKYSSFVRIGTGLSFADYVWVRSKPWKVWDPKNPPEFLQTAKKGQEDKGDVYLEPEDSFILKVKAAEITPSDQYHMGFTMRFPRALAIRDDLSIADCMTATEVFESLKSERKRKMEDDAGITTKKRKTTVKKVALLPEYSGPNLKKVAVKTDIFNGMKFVVFSDPKSRTGEADKKELMKTIHANGGTCSQIVNKNSEAIVIYGGSITPYDLKLVIDKGIHDVIKPSWITDSVTLGEPAPFKKKYFFHATEERKYADEYNEDDGEEEGAVPSADEQERDVKSGTVEPGSETEDEDEEQAPEIKEEQDGELHEWLKVDDRKSPALPAHDEEDSVTEDDSDNADVADEEEPDLDDWFQVKGETEDEGAGALATASRHRETTPDVDGDVKMGESEEAMDYDPDVIFKHLCFYLDSPANAQRHGMATRPKYEAAITKSFEEVEKLIKDNGGKIVDLDEPKLTHVVLDKRDDSRRVELMKRTSKPRRRHLVLSDYIEACIDEGTLLDEEGESF</sequence>
<comment type="function">
    <text evidence="2">DNA ligase involved in DNA non-homologous end joining (NHEJ); required for double-strand break (DSB) repair.</text>
</comment>
<comment type="catalytic activity">
    <reaction evidence="5">
        <text>ATP + (deoxyribonucleotide)n-3'-hydroxyl + 5'-phospho-(deoxyribonucleotide)m = (deoxyribonucleotide)n+m + AMP + diphosphate.</text>
        <dbReference type="EC" id="6.5.1.1"/>
    </reaction>
</comment>
<comment type="cofactor">
    <cofactor evidence="1">
        <name>Mg(2+)</name>
        <dbReference type="ChEBI" id="CHEBI:18420"/>
    </cofactor>
</comment>
<comment type="subcellular location">
    <subcellularLocation>
        <location evidence="2">Nucleus</location>
    </subcellularLocation>
</comment>
<comment type="similarity">
    <text evidence="7">Belongs to the ATP-dependent DNA ligase family.</text>
</comment>
<comment type="sequence caution" evidence="7">
    <conflict type="erroneous gene model prediction">
        <sequence resource="EMBL-CDS" id="EFI27358"/>
    </conflict>
</comment>
<organism>
    <name type="scientific">Coprinopsis cinerea (strain Okayama-7 / 130 / ATCC MYA-4618 / FGSC 9003)</name>
    <name type="common">Inky cap fungus</name>
    <name type="synonym">Hormographiella aspergillata</name>
    <dbReference type="NCBI Taxonomy" id="240176"/>
    <lineage>
        <taxon>Eukaryota</taxon>
        <taxon>Fungi</taxon>
        <taxon>Dikarya</taxon>
        <taxon>Basidiomycota</taxon>
        <taxon>Agaricomycotina</taxon>
        <taxon>Agaricomycetes</taxon>
        <taxon>Agaricomycetidae</taxon>
        <taxon>Agaricales</taxon>
        <taxon>Agaricineae</taxon>
        <taxon>Psathyrellaceae</taxon>
        <taxon>Coprinopsis</taxon>
    </lineage>
</organism>
<gene>
    <name type="primary">LIG4</name>
    <name type="ORF">CC1G_14831</name>
</gene>
<name>DNLI4_COPC7</name>
<proteinExistence type="inferred from homology"/>
<accession>A8N936</accession>
<accession>D6RNV6</accession>
<keyword id="KW-0067">ATP-binding</keyword>
<keyword id="KW-0227">DNA damage</keyword>
<keyword id="KW-0233">DNA recombination</keyword>
<keyword id="KW-0234">DNA repair</keyword>
<keyword id="KW-0436">Ligase</keyword>
<keyword id="KW-0460">Magnesium</keyword>
<keyword id="KW-0479">Metal-binding</keyword>
<keyword id="KW-0547">Nucleotide-binding</keyword>
<keyword id="KW-0539">Nucleus</keyword>
<keyword id="KW-1185">Reference proteome</keyword>
<keyword id="KW-0677">Repeat</keyword>
<feature type="chain" id="PRO_0000333259" description="DNA ligase 4">
    <location>
        <begin position="1"/>
        <end position="1025"/>
    </location>
</feature>
<feature type="domain" description="BRCT 1" evidence="4">
    <location>
        <begin position="667"/>
        <end position="763"/>
    </location>
</feature>
<feature type="domain" description="BRCT 2" evidence="4">
    <location>
        <begin position="915"/>
        <end position="1025"/>
    </location>
</feature>
<feature type="region of interest" description="Disordered" evidence="6">
    <location>
        <begin position="1"/>
        <end position="36"/>
    </location>
</feature>
<feature type="region of interest" description="Disordered" evidence="6">
    <location>
        <begin position="773"/>
        <end position="904"/>
    </location>
</feature>
<feature type="compositionally biased region" description="Acidic residues" evidence="6">
    <location>
        <begin position="775"/>
        <end position="785"/>
    </location>
</feature>
<feature type="compositionally biased region" description="Acidic residues" evidence="6">
    <location>
        <begin position="806"/>
        <end position="816"/>
    </location>
</feature>
<feature type="compositionally biased region" description="Basic and acidic residues" evidence="6">
    <location>
        <begin position="817"/>
        <end position="838"/>
    </location>
</feature>
<feature type="compositionally biased region" description="Acidic residues" evidence="6">
    <location>
        <begin position="845"/>
        <end position="870"/>
    </location>
</feature>
<feature type="compositionally biased region" description="Basic and acidic residues" evidence="6">
    <location>
        <begin position="891"/>
        <end position="904"/>
    </location>
</feature>
<feature type="active site" description="N6-AMP-lysine intermediate" evidence="5">
    <location>
        <position position="291"/>
    </location>
</feature>
<feature type="binding site" evidence="1">
    <location>
        <position position="289"/>
    </location>
    <ligand>
        <name>ATP</name>
        <dbReference type="ChEBI" id="CHEBI:30616"/>
    </ligand>
</feature>
<feature type="binding site" evidence="1">
    <location>
        <position position="291"/>
    </location>
    <ligand>
        <name>ATP</name>
        <dbReference type="ChEBI" id="CHEBI:30616"/>
    </ligand>
</feature>
<feature type="binding site" evidence="1">
    <location>
        <position position="292"/>
    </location>
    <ligand>
        <name>ATP</name>
        <dbReference type="ChEBI" id="CHEBI:30616"/>
    </ligand>
</feature>
<feature type="binding site" evidence="1">
    <location>
        <position position="296"/>
    </location>
    <ligand>
        <name>ATP</name>
        <dbReference type="ChEBI" id="CHEBI:30616"/>
    </ligand>
</feature>
<feature type="binding site" evidence="1">
    <location>
        <position position="349"/>
    </location>
    <ligand>
        <name>ATP</name>
        <dbReference type="ChEBI" id="CHEBI:30616"/>
    </ligand>
</feature>
<feature type="binding site" evidence="3">
    <location>
        <position position="349"/>
    </location>
    <ligand>
        <name>Mg(2+)</name>
        <dbReference type="ChEBI" id="CHEBI:18420"/>
        <label>1</label>
    </ligand>
</feature>
<feature type="binding site" evidence="1">
    <location>
        <position position="387"/>
    </location>
    <ligand>
        <name>ATP</name>
        <dbReference type="ChEBI" id="CHEBI:30616"/>
    </ligand>
</feature>
<feature type="binding site" evidence="1">
    <location>
        <position position="447"/>
    </location>
    <ligand>
        <name>ATP</name>
        <dbReference type="ChEBI" id="CHEBI:30616"/>
    </ligand>
</feature>
<feature type="binding site" evidence="3">
    <location>
        <position position="447"/>
    </location>
    <ligand>
        <name>Mg(2+)</name>
        <dbReference type="ChEBI" id="CHEBI:18420"/>
        <label>2</label>
    </ligand>
</feature>
<feature type="binding site" evidence="1">
    <location>
        <position position="452"/>
    </location>
    <ligand>
        <name>ATP</name>
        <dbReference type="ChEBI" id="CHEBI:30616"/>
    </ligand>
</feature>
<feature type="binding site" evidence="1">
    <location>
        <position position="469"/>
    </location>
    <ligand>
        <name>ATP</name>
        <dbReference type="ChEBI" id="CHEBI:30616"/>
    </ligand>
</feature>
<feature type="binding site" evidence="1">
    <location>
        <position position="471"/>
    </location>
    <ligand>
        <name>ATP</name>
        <dbReference type="ChEBI" id="CHEBI:30616"/>
    </ligand>
</feature>
<evidence type="ECO:0000250" key="1">
    <source>
        <dbReference type="UniProtKB" id="P49917"/>
    </source>
</evidence>
<evidence type="ECO:0000250" key="2">
    <source>
        <dbReference type="UniProtKB" id="Q08387"/>
    </source>
</evidence>
<evidence type="ECO:0000255" key="3"/>
<evidence type="ECO:0000255" key="4">
    <source>
        <dbReference type="PROSITE-ProRule" id="PRU00033"/>
    </source>
</evidence>
<evidence type="ECO:0000255" key="5">
    <source>
        <dbReference type="PROSITE-ProRule" id="PRU10135"/>
    </source>
</evidence>
<evidence type="ECO:0000256" key="6">
    <source>
        <dbReference type="SAM" id="MobiDB-lite"/>
    </source>
</evidence>
<evidence type="ECO:0000305" key="7"/>
<dbReference type="EC" id="6.5.1.1" evidence="5"/>
<dbReference type="EMBL" id="AACS02000007">
    <property type="protein sequence ID" value="EFI27358.1"/>
    <property type="status" value="ALT_SEQ"/>
    <property type="molecule type" value="Genomic_DNA"/>
</dbReference>
<dbReference type="RefSeq" id="XP_002910852.1">
    <property type="nucleotide sequence ID" value="XM_002910806.1"/>
</dbReference>
<dbReference type="SMR" id="A8N936"/>
<dbReference type="FunCoup" id="A8N936">
    <property type="interactions" value="251"/>
</dbReference>
<dbReference type="STRING" id="240176.A8N936"/>
<dbReference type="GeneID" id="9379321"/>
<dbReference type="KEGG" id="cci:CC1G_14831"/>
<dbReference type="eggNOG" id="KOG0966">
    <property type="taxonomic scope" value="Eukaryota"/>
</dbReference>
<dbReference type="HOGENOM" id="CLU_004844_1_0_1"/>
<dbReference type="InParanoid" id="A8N936"/>
<dbReference type="OrthoDB" id="151490at2759"/>
<dbReference type="Proteomes" id="UP000001861">
    <property type="component" value="Unassembled WGS sequence"/>
</dbReference>
<dbReference type="GO" id="GO:0032807">
    <property type="term" value="C:DNA ligase IV complex"/>
    <property type="evidence" value="ECO:0007669"/>
    <property type="project" value="TreeGrafter"/>
</dbReference>
<dbReference type="GO" id="GO:0005524">
    <property type="term" value="F:ATP binding"/>
    <property type="evidence" value="ECO:0007669"/>
    <property type="project" value="UniProtKB-KW"/>
</dbReference>
<dbReference type="GO" id="GO:0003677">
    <property type="term" value="F:DNA binding"/>
    <property type="evidence" value="ECO:0007669"/>
    <property type="project" value="InterPro"/>
</dbReference>
<dbReference type="GO" id="GO:0003910">
    <property type="term" value="F:DNA ligase (ATP) activity"/>
    <property type="evidence" value="ECO:0000250"/>
    <property type="project" value="UniProtKB"/>
</dbReference>
<dbReference type="GO" id="GO:0046872">
    <property type="term" value="F:metal ion binding"/>
    <property type="evidence" value="ECO:0007669"/>
    <property type="project" value="UniProtKB-KW"/>
</dbReference>
<dbReference type="GO" id="GO:0071897">
    <property type="term" value="P:DNA biosynthetic process"/>
    <property type="evidence" value="ECO:0007669"/>
    <property type="project" value="InterPro"/>
</dbReference>
<dbReference type="GO" id="GO:0006310">
    <property type="term" value="P:DNA recombination"/>
    <property type="evidence" value="ECO:0007669"/>
    <property type="project" value="UniProtKB-KW"/>
</dbReference>
<dbReference type="GO" id="GO:0097680">
    <property type="term" value="P:double-strand break repair via classical nonhomologous end joining"/>
    <property type="evidence" value="ECO:0000250"/>
    <property type="project" value="UniProtKB"/>
</dbReference>
<dbReference type="GO" id="GO:0006297">
    <property type="term" value="P:nucleotide-excision repair, DNA gap filling"/>
    <property type="evidence" value="ECO:0007669"/>
    <property type="project" value="TreeGrafter"/>
</dbReference>
<dbReference type="CDD" id="cd07903">
    <property type="entry name" value="Adenylation_DNA_ligase_IV"/>
    <property type="match status" value="1"/>
</dbReference>
<dbReference type="CDD" id="cd18435">
    <property type="entry name" value="BRCT_BRC1_like_rpt1"/>
    <property type="match status" value="1"/>
</dbReference>
<dbReference type="CDD" id="cd17722">
    <property type="entry name" value="BRCT_DNA_ligase_IV_rpt1"/>
    <property type="match status" value="1"/>
</dbReference>
<dbReference type="CDD" id="cd07968">
    <property type="entry name" value="OBF_DNA_ligase_IV"/>
    <property type="match status" value="1"/>
</dbReference>
<dbReference type="Gene3D" id="3.40.50.10190">
    <property type="entry name" value="BRCT domain"/>
    <property type="match status" value="2"/>
</dbReference>
<dbReference type="Gene3D" id="1.10.3260.10">
    <property type="entry name" value="DNA ligase, ATP-dependent, N-terminal domain"/>
    <property type="match status" value="1"/>
</dbReference>
<dbReference type="Gene3D" id="3.30.470.30">
    <property type="entry name" value="DNA ligase/mRNA capping enzyme"/>
    <property type="match status" value="1"/>
</dbReference>
<dbReference type="Gene3D" id="2.40.50.140">
    <property type="entry name" value="Nucleic acid-binding proteins"/>
    <property type="match status" value="1"/>
</dbReference>
<dbReference type="InterPro" id="IPR044125">
    <property type="entry name" value="Adenylation_DNA_ligase_IV"/>
</dbReference>
<dbReference type="InterPro" id="IPR001357">
    <property type="entry name" value="BRCT_dom"/>
</dbReference>
<dbReference type="InterPro" id="IPR036420">
    <property type="entry name" value="BRCT_dom_sf"/>
</dbReference>
<dbReference type="InterPro" id="IPR000977">
    <property type="entry name" value="DNA_ligase_ATP-dep"/>
</dbReference>
<dbReference type="InterPro" id="IPR012309">
    <property type="entry name" value="DNA_ligase_ATP-dep_C"/>
</dbReference>
<dbReference type="InterPro" id="IPR012310">
    <property type="entry name" value="DNA_ligase_ATP-dep_cent"/>
</dbReference>
<dbReference type="InterPro" id="IPR016059">
    <property type="entry name" value="DNA_ligase_ATP-dep_CS"/>
</dbReference>
<dbReference type="InterPro" id="IPR012308">
    <property type="entry name" value="DNA_ligase_ATP-dep_N"/>
</dbReference>
<dbReference type="InterPro" id="IPR036599">
    <property type="entry name" value="DNA_ligase_N_sf"/>
</dbReference>
<dbReference type="InterPro" id="IPR029710">
    <property type="entry name" value="LIG4"/>
</dbReference>
<dbReference type="InterPro" id="IPR012340">
    <property type="entry name" value="NA-bd_OB-fold"/>
</dbReference>
<dbReference type="NCBIfam" id="TIGR00574">
    <property type="entry name" value="dnl1"/>
    <property type="match status" value="1"/>
</dbReference>
<dbReference type="PANTHER" id="PTHR45997">
    <property type="entry name" value="DNA LIGASE 4"/>
    <property type="match status" value="1"/>
</dbReference>
<dbReference type="PANTHER" id="PTHR45997:SF1">
    <property type="entry name" value="DNA LIGASE 4"/>
    <property type="match status" value="1"/>
</dbReference>
<dbReference type="Pfam" id="PF00533">
    <property type="entry name" value="BRCT"/>
    <property type="match status" value="1"/>
</dbReference>
<dbReference type="Pfam" id="PF04679">
    <property type="entry name" value="DNA_ligase_A_C"/>
    <property type="match status" value="1"/>
</dbReference>
<dbReference type="Pfam" id="PF01068">
    <property type="entry name" value="DNA_ligase_A_M"/>
    <property type="match status" value="1"/>
</dbReference>
<dbReference type="Pfam" id="PF04675">
    <property type="entry name" value="DNA_ligase_A_N"/>
    <property type="match status" value="1"/>
</dbReference>
<dbReference type="SMART" id="SM00292">
    <property type="entry name" value="BRCT"/>
    <property type="match status" value="2"/>
</dbReference>
<dbReference type="SUPFAM" id="SSF117018">
    <property type="entry name" value="ATP-dependent DNA ligase DNA-binding domain"/>
    <property type="match status" value="1"/>
</dbReference>
<dbReference type="SUPFAM" id="SSF52113">
    <property type="entry name" value="BRCT domain"/>
    <property type="match status" value="2"/>
</dbReference>
<dbReference type="SUPFAM" id="SSF56091">
    <property type="entry name" value="DNA ligase/mRNA capping enzyme, catalytic domain"/>
    <property type="match status" value="1"/>
</dbReference>
<dbReference type="SUPFAM" id="SSF50249">
    <property type="entry name" value="Nucleic acid-binding proteins"/>
    <property type="match status" value="1"/>
</dbReference>
<dbReference type="PROSITE" id="PS50172">
    <property type="entry name" value="BRCT"/>
    <property type="match status" value="2"/>
</dbReference>
<dbReference type="PROSITE" id="PS00697">
    <property type="entry name" value="DNA_LIGASE_A1"/>
    <property type="match status" value="1"/>
</dbReference>
<dbReference type="PROSITE" id="PS00333">
    <property type="entry name" value="DNA_LIGASE_A2"/>
    <property type="match status" value="1"/>
</dbReference>
<dbReference type="PROSITE" id="PS50160">
    <property type="entry name" value="DNA_LIGASE_A3"/>
    <property type="match status" value="1"/>
</dbReference>
<protein>
    <recommendedName>
        <fullName>DNA ligase 4</fullName>
        <ecNumber evidence="5">6.5.1.1</ecNumber>
    </recommendedName>
    <alternativeName>
        <fullName>DNA ligase IV</fullName>
    </alternativeName>
    <alternativeName>
        <fullName>Polydeoxyribonucleotide synthase [ATP] 4</fullName>
    </alternativeName>
</protein>
<reference key="1">
    <citation type="journal article" date="2010" name="Proc. Natl. Acad. Sci. U.S.A.">
        <title>Insights into evolution of multicellular fungi from the assembled chromosomes of the mushroom Coprinopsis cinerea (Coprinus cinereus).</title>
        <authorList>
            <person name="Stajich J.E."/>
            <person name="Wilke S.K."/>
            <person name="Ahren D."/>
            <person name="Au C.H."/>
            <person name="Birren B.W."/>
            <person name="Borodovsky M."/>
            <person name="Burns C."/>
            <person name="Canbaeck B."/>
            <person name="Casselton L.A."/>
            <person name="Cheng C.K."/>
            <person name="Deng J."/>
            <person name="Dietrich F.S."/>
            <person name="Fargo D.C."/>
            <person name="Farman M.L."/>
            <person name="Gathman A.C."/>
            <person name="Goldberg J."/>
            <person name="Guigo R."/>
            <person name="Hoegger P.J."/>
            <person name="Hooker J.B."/>
            <person name="Huggins A."/>
            <person name="James T.Y."/>
            <person name="Kamada T."/>
            <person name="Kilaru S."/>
            <person name="Kodira C."/>
            <person name="Kuees U."/>
            <person name="Kupfer D."/>
            <person name="Kwan H.S."/>
            <person name="Lomsadze A."/>
            <person name="Li W."/>
            <person name="Lilly W.W."/>
            <person name="Ma L.-J."/>
            <person name="Mackey A.J."/>
            <person name="Manning G."/>
            <person name="Martin F."/>
            <person name="Muraguchi H."/>
            <person name="Natvig D.O."/>
            <person name="Palmerini H."/>
            <person name="Ramesh M.A."/>
            <person name="Rehmeyer C.J."/>
            <person name="Roe B.A."/>
            <person name="Shenoy N."/>
            <person name="Stanke M."/>
            <person name="Ter-Hovhannisyan V."/>
            <person name="Tunlid A."/>
            <person name="Velagapudi R."/>
            <person name="Vision T.J."/>
            <person name="Zeng Q."/>
            <person name="Zolan M.E."/>
            <person name="Pukkila P.J."/>
        </authorList>
    </citation>
    <scope>NUCLEOTIDE SEQUENCE [LARGE SCALE GENOMIC DNA]</scope>
    <source>
        <strain>Okayama-7 / 130 / ATCC MYA-4618 / FGSC 9003</strain>
    </source>
</reference>